<proteinExistence type="inferred from homology"/>
<comment type="function">
    <text evidence="1">Involved in coproporphyrin-dependent heme b biosynthesis. Catalyzes the insertion of ferrous iron into coproporphyrin III to form Fe-coproporphyrin III.</text>
</comment>
<comment type="catalytic activity">
    <reaction evidence="1">
        <text>Fe-coproporphyrin III + 2 H(+) = coproporphyrin III + Fe(2+)</text>
        <dbReference type="Rhea" id="RHEA:49572"/>
        <dbReference type="ChEBI" id="CHEBI:15378"/>
        <dbReference type="ChEBI" id="CHEBI:29033"/>
        <dbReference type="ChEBI" id="CHEBI:68438"/>
        <dbReference type="ChEBI" id="CHEBI:131725"/>
        <dbReference type="EC" id="4.99.1.9"/>
    </reaction>
    <physiologicalReaction direction="right-to-left" evidence="1">
        <dbReference type="Rhea" id="RHEA:49574"/>
    </physiologicalReaction>
</comment>
<comment type="pathway">
    <text evidence="1">Porphyrin-containing compound metabolism; protoheme biosynthesis.</text>
</comment>
<comment type="subcellular location">
    <subcellularLocation>
        <location evidence="1">Cytoplasm</location>
    </subcellularLocation>
</comment>
<comment type="similarity">
    <text evidence="1">Belongs to the ferrochelatase family.</text>
</comment>
<accession>Q97R30</accession>
<dbReference type="EC" id="4.99.1.9" evidence="1"/>
<dbReference type="EMBL" id="AE005672">
    <property type="protein sequence ID" value="AAK75125.1"/>
    <property type="molecule type" value="Genomic_DNA"/>
</dbReference>
<dbReference type="PIR" id="D95116">
    <property type="entry name" value="D95116"/>
</dbReference>
<dbReference type="SMR" id="Q97R30"/>
<dbReference type="PaxDb" id="170187-SP_1009"/>
<dbReference type="EnsemblBacteria" id="AAK75125">
    <property type="protein sequence ID" value="AAK75125"/>
    <property type="gene ID" value="SP_1009"/>
</dbReference>
<dbReference type="KEGG" id="spn:SP_1009"/>
<dbReference type="eggNOG" id="COG0276">
    <property type="taxonomic scope" value="Bacteria"/>
</dbReference>
<dbReference type="PhylomeDB" id="Q97R30"/>
<dbReference type="BioCyc" id="SPNE170187:G1FZB-1038-MONOMER"/>
<dbReference type="UniPathway" id="UPA00252"/>
<dbReference type="Proteomes" id="UP000000585">
    <property type="component" value="Chromosome"/>
</dbReference>
<dbReference type="GO" id="GO:0005737">
    <property type="term" value="C:cytoplasm"/>
    <property type="evidence" value="ECO:0007669"/>
    <property type="project" value="UniProtKB-SubCell"/>
</dbReference>
<dbReference type="GO" id="GO:0004325">
    <property type="term" value="F:ferrochelatase activity"/>
    <property type="evidence" value="ECO:0007669"/>
    <property type="project" value="UniProtKB-UniRule"/>
</dbReference>
<dbReference type="GO" id="GO:0046872">
    <property type="term" value="F:metal ion binding"/>
    <property type="evidence" value="ECO:0007669"/>
    <property type="project" value="UniProtKB-KW"/>
</dbReference>
<dbReference type="GO" id="GO:0006783">
    <property type="term" value="P:heme biosynthetic process"/>
    <property type="evidence" value="ECO:0007669"/>
    <property type="project" value="UniProtKB-UniRule"/>
</dbReference>
<dbReference type="CDD" id="cd00419">
    <property type="entry name" value="Ferrochelatase_C"/>
    <property type="match status" value="1"/>
</dbReference>
<dbReference type="CDD" id="cd03411">
    <property type="entry name" value="Ferrochelatase_N"/>
    <property type="match status" value="1"/>
</dbReference>
<dbReference type="FunFam" id="3.40.50.1400:FF:000007">
    <property type="entry name" value="Ferrochelatase"/>
    <property type="match status" value="1"/>
</dbReference>
<dbReference type="Gene3D" id="3.40.50.1400">
    <property type="match status" value="2"/>
</dbReference>
<dbReference type="HAMAP" id="MF_00323">
    <property type="entry name" value="Ferrochelatase"/>
    <property type="match status" value="1"/>
</dbReference>
<dbReference type="InterPro" id="IPR001015">
    <property type="entry name" value="Ferrochelatase"/>
</dbReference>
<dbReference type="InterPro" id="IPR019772">
    <property type="entry name" value="Ferrochelatase_AS"/>
</dbReference>
<dbReference type="InterPro" id="IPR033644">
    <property type="entry name" value="Ferrochelatase_C"/>
</dbReference>
<dbReference type="InterPro" id="IPR033659">
    <property type="entry name" value="Ferrochelatase_N"/>
</dbReference>
<dbReference type="NCBIfam" id="TIGR00109">
    <property type="entry name" value="hemH"/>
    <property type="match status" value="1"/>
</dbReference>
<dbReference type="PANTHER" id="PTHR11108">
    <property type="entry name" value="FERROCHELATASE"/>
    <property type="match status" value="1"/>
</dbReference>
<dbReference type="PANTHER" id="PTHR11108:SF1">
    <property type="entry name" value="FERROCHELATASE, MITOCHONDRIAL"/>
    <property type="match status" value="1"/>
</dbReference>
<dbReference type="Pfam" id="PF00762">
    <property type="entry name" value="Ferrochelatase"/>
    <property type="match status" value="1"/>
</dbReference>
<dbReference type="SUPFAM" id="SSF53800">
    <property type="entry name" value="Chelatase"/>
    <property type="match status" value="1"/>
</dbReference>
<dbReference type="PROSITE" id="PS00534">
    <property type="entry name" value="FERROCHELATASE"/>
    <property type="match status" value="1"/>
</dbReference>
<reference key="1">
    <citation type="journal article" date="2001" name="Science">
        <title>Complete genome sequence of a virulent isolate of Streptococcus pneumoniae.</title>
        <authorList>
            <person name="Tettelin H."/>
            <person name="Nelson K.E."/>
            <person name="Paulsen I.T."/>
            <person name="Eisen J.A."/>
            <person name="Read T.D."/>
            <person name="Peterson S.N."/>
            <person name="Heidelberg J.F."/>
            <person name="DeBoy R.T."/>
            <person name="Haft D.H."/>
            <person name="Dodson R.J."/>
            <person name="Durkin A.S."/>
            <person name="Gwinn M.L."/>
            <person name="Kolonay J.F."/>
            <person name="Nelson W.C."/>
            <person name="Peterson J.D."/>
            <person name="Umayam L.A."/>
            <person name="White O."/>
            <person name="Salzberg S.L."/>
            <person name="Lewis M.R."/>
            <person name="Radune D."/>
            <person name="Holtzapple E.K."/>
            <person name="Khouri H.M."/>
            <person name="Wolf A.M."/>
            <person name="Utterback T.R."/>
            <person name="Hansen C.L."/>
            <person name="McDonald L.A."/>
            <person name="Feldblyum T.V."/>
            <person name="Angiuoli S.V."/>
            <person name="Dickinson T."/>
            <person name="Hickey E.K."/>
            <person name="Holt I.E."/>
            <person name="Loftus B.J."/>
            <person name="Yang F."/>
            <person name="Smith H.O."/>
            <person name="Venter J.C."/>
            <person name="Dougherty B.A."/>
            <person name="Morrison D.A."/>
            <person name="Hollingshead S.K."/>
            <person name="Fraser C.M."/>
        </authorList>
    </citation>
    <scope>NUCLEOTIDE SEQUENCE [LARGE SCALE GENOMIC DNA]</scope>
    <source>
        <strain>ATCC BAA-334 / TIGR4</strain>
    </source>
</reference>
<sequence length="364" mass="42409">MKKAILMMTFGSPEEIIFEGVADFFTNIRRGVRPQDHEIQTLYDNYVRIGGTPLQKITRQEVALVEARLGSEYSVYFANKFSSPFIPDVIGQMEADGIEQCICLILEPHYSFYSVMGYEKFLESKQIQFLVIKDWYQEEALLNYWADEIAKILKEEVKQDSFKVIFSAHSVPIFALDFGDPYIDQIFENSKLVAEKLGLSSEQYTNTWQSESDIGIPWIKPDVLEYLREQTEHPDHYIFVPISFISEHIEVLFDNDVECYDLCQEFGVNYHRPPMPNTDSRLIDALVNTVRVNENQEFKEFLPEEETFDELVPSDETKNILAESQDLQMPEFVKKLIEKKGRENVKMPYLIKKMLEKAGKLPKE</sequence>
<protein>
    <recommendedName>
        <fullName evidence="1">Coproporphyrin III ferrochelatase</fullName>
        <ecNumber evidence="1">4.99.1.9</ecNumber>
    </recommendedName>
</protein>
<name>CPFC_STRPN</name>
<evidence type="ECO:0000255" key="1">
    <source>
        <dbReference type="HAMAP-Rule" id="MF_00323"/>
    </source>
</evidence>
<gene>
    <name evidence="1" type="primary">cpfC</name>
    <name type="ordered locus">SP_1009</name>
</gene>
<keyword id="KW-0963">Cytoplasm</keyword>
<keyword id="KW-0350">Heme biosynthesis</keyword>
<keyword id="KW-0408">Iron</keyword>
<keyword id="KW-0456">Lyase</keyword>
<keyword id="KW-0479">Metal-binding</keyword>
<keyword id="KW-0627">Porphyrin biosynthesis</keyword>
<keyword id="KW-1185">Reference proteome</keyword>
<organism>
    <name type="scientific">Streptococcus pneumoniae serotype 4 (strain ATCC BAA-334 / TIGR4)</name>
    <dbReference type="NCBI Taxonomy" id="170187"/>
    <lineage>
        <taxon>Bacteria</taxon>
        <taxon>Bacillati</taxon>
        <taxon>Bacillota</taxon>
        <taxon>Bacilli</taxon>
        <taxon>Lactobacillales</taxon>
        <taxon>Streptococcaceae</taxon>
        <taxon>Streptococcus</taxon>
    </lineage>
</organism>
<feature type="chain" id="PRO_0000175212" description="Coproporphyrin III ferrochelatase">
    <location>
        <begin position="1"/>
        <end position="364"/>
    </location>
</feature>
<feature type="binding site" evidence="1">
    <location>
        <position position="29"/>
    </location>
    <ligand>
        <name>Fe-coproporphyrin III</name>
        <dbReference type="ChEBI" id="CHEBI:68438"/>
    </ligand>
</feature>
<feature type="binding site" evidence="1">
    <location>
        <position position="118"/>
    </location>
    <ligand>
        <name>Fe-coproporphyrin III</name>
        <dbReference type="ChEBI" id="CHEBI:68438"/>
    </ligand>
</feature>
<feature type="binding site" evidence="1">
    <location>
        <position position="169"/>
    </location>
    <ligand>
        <name>Fe(2+)</name>
        <dbReference type="ChEBI" id="CHEBI:29033"/>
    </ligand>
</feature>
<feature type="binding site" evidence="1">
    <location>
        <position position="250"/>
    </location>
    <ligand>
        <name>Fe(2+)</name>
        <dbReference type="ChEBI" id="CHEBI:29033"/>
    </ligand>
</feature>